<protein>
    <recommendedName>
        <fullName>Histone H3-7</fullName>
    </recommendedName>
</protein>
<organism>
    <name type="scientific">Stylonychia lemnae</name>
    <name type="common">Ciliate</name>
    <dbReference type="NCBI Taxonomy" id="5949"/>
    <lineage>
        <taxon>Eukaryota</taxon>
        <taxon>Sar</taxon>
        <taxon>Alveolata</taxon>
        <taxon>Ciliophora</taxon>
        <taxon>Intramacronucleata</taxon>
        <taxon>Spirotrichea</taxon>
        <taxon>Stichotrichia</taxon>
        <taxon>Sporadotrichida</taxon>
        <taxon>Oxytrichidae</taxon>
        <taxon>Stylonychinae</taxon>
        <taxon>Stylonychia</taxon>
    </lineage>
</organism>
<evidence type="ECO:0000250" key="1"/>
<evidence type="ECO:0000256" key="2">
    <source>
        <dbReference type="SAM" id="MobiDB-lite"/>
    </source>
</evidence>
<evidence type="ECO:0000305" key="3"/>
<comment type="function">
    <text>Core component of nucleosome. Nucleosomes wrap and compact DNA into chromatin, limiting DNA accessibility to the cellular machineries which require DNA as a template. Histones thereby play a central role in transcription regulation, DNA repair, DNA replication and chromosomal stability. DNA accessibility is regulated via a complex set of post-translational modifications of histones, also called histone code, and nucleosome remodeling.</text>
</comment>
<comment type="subunit">
    <text>The nucleosome is a histone octamer containing two molecules each of H2A, H2B, H3 and H4 assembled in one H3-H4 heterotetramer and two H2A-H2B heterodimers. The octamer wraps approximately 147 bp of DNA.</text>
</comment>
<comment type="subcellular location">
    <subcellularLocation>
        <location evidence="1">Nucleus</location>
    </subcellularLocation>
    <subcellularLocation>
        <location evidence="1">Chromosome</location>
    </subcellularLocation>
</comment>
<comment type="similarity">
    <text evidence="3">Belongs to the histone H3 family.</text>
</comment>
<proteinExistence type="inferred from homology"/>
<keyword id="KW-0158">Chromosome</keyword>
<keyword id="KW-0238">DNA-binding</keyword>
<keyword id="KW-0544">Nucleosome core</keyword>
<keyword id="KW-0539">Nucleus</keyword>
<reference key="1">
    <citation type="journal article" date="1999" name="FEMS Microbiol. Lett.">
        <title>Several highly divergent histone H3 genes are present in the hypotrichous ciliate Stylonychia lemnae.</title>
        <authorList>
            <person name="Bernhard D."/>
        </authorList>
    </citation>
    <scope>NUCLEOTIDE SEQUENCE [GENOMIC DNA]</scope>
</reference>
<accession>P81201</accession>
<dbReference type="EMBL" id="Y16633">
    <property type="protein sequence ID" value="CAA76336.1"/>
    <property type="molecule type" value="Genomic_DNA"/>
</dbReference>
<dbReference type="SMR" id="P81201"/>
<dbReference type="GO" id="GO:0000786">
    <property type="term" value="C:nucleosome"/>
    <property type="evidence" value="ECO:0007669"/>
    <property type="project" value="UniProtKB-KW"/>
</dbReference>
<dbReference type="GO" id="GO:0005634">
    <property type="term" value="C:nucleus"/>
    <property type="evidence" value="ECO:0007669"/>
    <property type="project" value="UniProtKB-SubCell"/>
</dbReference>
<dbReference type="GO" id="GO:0003677">
    <property type="term" value="F:DNA binding"/>
    <property type="evidence" value="ECO:0007669"/>
    <property type="project" value="UniProtKB-KW"/>
</dbReference>
<dbReference type="GO" id="GO:0046982">
    <property type="term" value="F:protein heterodimerization activity"/>
    <property type="evidence" value="ECO:0007669"/>
    <property type="project" value="InterPro"/>
</dbReference>
<dbReference type="GO" id="GO:0030527">
    <property type="term" value="F:structural constituent of chromatin"/>
    <property type="evidence" value="ECO:0007669"/>
    <property type="project" value="InterPro"/>
</dbReference>
<dbReference type="CDD" id="cd22911">
    <property type="entry name" value="HFD_H3"/>
    <property type="match status" value="1"/>
</dbReference>
<dbReference type="FunFam" id="1.10.20.10:FF:000001">
    <property type="entry name" value="Histone H3"/>
    <property type="match status" value="1"/>
</dbReference>
<dbReference type="Gene3D" id="1.10.20.10">
    <property type="entry name" value="Histone, subunit A"/>
    <property type="match status" value="1"/>
</dbReference>
<dbReference type="InterPro" id="IPR009072">
    <property type="entry name" value="Histone-fold"/>
</dbReference>
<dbReference type="InterPro" id="IPR007125">
    <property type="entry name" value="Histone_H2A/H2B/H3"/>
</dbReference>
<dbReference type="InterPro" id="IPR000164">
    <property type="entry name" value="Histone_H3/CENP-A"/>
</dbReference>
<dbReference type="PANTHER" id="PTHR11426">
    <property type="entry name" value="HISTONE H3"/>
    <property type="match status" value="1"/>
</dbReference>
<dbReference type="Pfam" id="PF00125">
    <property type="entry name" value="Histone"/>
    <property type="match status" value="1"/>
</dbReference>
<dbReference type="PRINTS" id="PR00622">
    <property type="entry name" value="HISTONEH3"/>
</dbReference>
<dbReference type="SMART" id="SM00428">
    <property type="entry name" value="H3"/>
    <property type="match status" value="1"/>
</dbReference>
<dbReference type="SUPFAM" id="SSF47113">
    <property type="entry name" value="Histone-fold"/>
    <property type="match status" value="1"/>
</dbReference>
<dbReference type="PROSITE" id="PS00322">
    <property type="entry name" value="HISTONE_H3_1"/>
    <property type="match status" value="1"/>
</dbReference>
<dbReference type="PROSITE" id="PS00959">
    <property type="entry name" value="HISTONE_H3_2"/>
    <property type="match status" value="1"/>
</dbReference>
<feature type="chain" id="PRO_0000221327" description="Histone H3-7">
    <location>
        <begin position="1" status="less than"/>
        <end position="114" status="greater than"/>
    </location>
</feature>
<feature type="region of interest" description="Disordered" evidence="2">
    <location>
        <begin position="1"/>
        <end position="32"/>
    </location>
</feature>
<feature type="compositionally biased region" description="Basic residues" evidence="2">
    <location>
        <begin position="1"/>
        <end position="17"/>
    </location>
</feature>
<feature type="compositionally biased region" description="Low complexity" evidence="2">
    <location>
        <begin position="18"/>
        <end position="28"/>
    </location>
</feature>
<feature type="non-terminal residue">
    <location>
        <position position="1"/>
    </location>
</feature>
<feature type="non-terminal residue">
    <location>
        <position position="114"/>
    </location>
</feature>
<name>H37_STYLE</name>
<gene>
    <name type="primary">H3-7</name>
</gene>
<sequence>NTGGKAPRKHIAHKQAKKSSAAAATGGVKKPHRFRPGTVALREIRRFQKSTELLIRKLPFQRLVREIASEFKNDLRFQSSAVLALQEASEAYLVGLFEDTNLAAIHAKRVTIMP</sequence>